<sequence>MFMGEYEHQLDAKGRMIVPSKFRYELNERFVITRGLDKCLFGYTLEEWQNIEEKMKSLPMTKRDARKFMRMFFSGAVEVELDKQGRINIPKNLREYANLTKECTVIGVSNRIEIWDRASWNGFYDESEDSFEDIAEDLIDFDF</sequence>
<proteinExistence type="inferred from homology"/>
<keyword id="KW-0963">Cytoplasm</keyword>
<keyword id="KW-0238">DNA-binding</keyword>
<keyword id="KW-1185">Reference proteome</keyword>
<keyword id="KW-0677">Repeat</keyword>
<keyword id="KW-0804">Transcription</keyword>
<keyword id="KW-0805">Transcription regulation</keyword>
<gene>
    <name evidence="1" type="primary">mraZ</name>
    <name type="ordered locus">Sca_0791</name>
</gene>
<reference key="1">
    <citation type="journal article" date="2009" name="Appl. Environ. Microbiol.">
        <title>Genome analysis of the meat starter culture bacterium Staphylococcus carnosus TM300.</title>
        <authorList>
            <person name="Rosenstein R."/>
            <person name="Nerz C."/>
            <person name="Biswas L."/>
            <person name="Resch A."/>
            <person name="Raddatz G."/>
            <person name="Schuster S.C."/>
            <person name="Goetz F."/>
        </authorList>
    </citation>
    <scope>NUCLEOTIDE SEQUENCE [LARGE SCALE GENOMIC DNA]</scope>
    <source>
        <strain>TM300</strain>
    </source>
</reference>
<evidence type="ECO:0000255" key="1">
    <source>
        <dbReference type="HAMAP-Rule" id="MF_01008"/>
    </source>
</evidence>
<evidence type="ECO:0000255" key="2">
    <source>
        <dbReference type="PROSITE-ProRule" id="PRU01076"/>
    </source>
</evidence>
<dbReference type="EMBL" id="AM295250">
    <property type="protein sequence ID" value="CAL27701.1"/>
    <property type="molecule type" value="Genomic_DNA"/>
</dbReference>
<dbReference type="RefSeq" id="WP_015900043.1">
    <property type="nucleotide sequence ID" value="NC_012121.1"/>
</dbReference>
<dbReference type="SMR" id="B9DPQ8"/>
<dbReference type="GeneID" id="93795727"/>
<dbReference type="KEGG" id="sca:SCA_0791"/>
<dbReference type="eggNOG" id="COG2001">
    <property type="taxonomic scope" value="Bacteria"/>
</dbReference>
<dbReference type="HOGENOM" id="CLU_107907_0_5_9"/>
<dbReference type="OrthoDB" id="9807753at2"/>
<dbReference type="BioCyc" id="SCAR396513:SCA_RS04010-MONOMER"/>
<dbReference type="Proteomes" id="UP000000444">
    <property type="component" value="Chromosome"/>
</dbReference>
<dbReference type="GO" id="GO:0005737">
    <property type="term" value="C:cytoplasm"/>
    <property type="evidence" value="ECO:0007669"/>
    <property type="project" value="UniProtKB-UniRule"/>
</dbReference>
<dbReference type="GO" id="GO:0009295">
    <property type="term" value="C:nucleoid"/>
    <property type="evidence" value="ECO:0007669"/>
    <property type="project" value="UniProtKB-SubCell"/>
</dbReference>
<dbReference type="GO" id="GO:0003700">
    <property type="term" value="F:DNA-binding transcription factor activity"/>
    <property type="evidence" value="ECO:0007669"/>
    <property type="project" value="UniProtKB-UniRule"/>
</dbReference>
<dbReference type="GO" id="GO:0000976">
    <property type="term" value="F:transcription cis-regulatory region binding"/>
    <property type="evidence" value="ECO:0007669"/>
    <property type="project" value="TreeGrafter"/>
</dbReference>
<dbReference type="GO" id="GO:2000143">
    <property type="term" value="P:negative regulation of DNA-templated transcription initiation"/>
    <property type="evidence" value="ECO:0007669"/>
    <property type="project" value="TreeGrafter"/>
</dbReference>
<dbReference type="CDD" id="cd16321">
    <property type="entry name" value="MraZ_C"/>
    <property type="match status" value="1"/>
</dbReference>
<dbReference type="CDD" id="cd16320">
    <property type="entry name" value="MraZ_N"/>
    <property type="match status" value="1"/>
</dbReference>
<dbReference type="FunFam" id="3.40.1550.20:FF:000002">
    <property type="entry name" value="Transcriptional regulator MraZ"/>
    <property type="match status" value="1"/>
</dbReference>
<dbReference type="Gene3D" id="3.40.1550.20">
    <property type="entry name" value="Transcriptional regulator MraZ domain"/>
    <property type="match status" value="1"/>
</dbReference>
<dbReference type="HAMAP" id="MF_01008">
    <property type="entry name" value="MraZ"/>
    <property type="match status" value="1"/>
</dbReference>
<dbReference type="InterPro" id="IPR003444">
    <property type="entry name" value="MraZ"/>
</dbReference>
<dbReference type="InterPro" id="IPR035644">
    <property type="entry name" value="MraZ_C"/>
</dbReference>
<dbReference type="InterPro" id="IPR020603">
    <property type="entry name" value="MraZ_dom"/>
</dbReference>
<dbReference type="InterPro" id="IPR035642">
    <property type="entry name" value="MraZ_N"/>
</dbReference>
<dbReference type="InterPro" id="IPR038619">
    <property type="entry name" value="MraZ_sf"/>
</dbReference>
<dbReference type="InterPro" id="IPR007159">
    <property type="entry name" value="SpoVT-AbrB_dom"/>
</dbReference>
<dbReference type="InterPro" id="IPR037914">
    <property type="entry name" value="SpoVT-AbrB_sf"/>
</dbReference>
<dbReference type="NCBIfam" id="TIGR00242">
    <property type="entry name" value="division/cell wall cluster transcriptional repressor MraZ"/>
    <property type="match status" value="1"/>
</dbReference>
<dbReference type="PANTHER" id="PTHR34701">
    <property type="entry name" value="TRANSCRIPTIONAL REGULATOR MRAZ"/>
    <property type="match status" value="1"/>
</dbReference>
<dbReference type="PANTHER" id="PTHR34701:SF1">
    <property type="entry name" value="TRANSCRIPTIONAL REGULATOR MRAZ"/>
    <property type="match status" value="1"/>
</dbReference>
<dbReference type="Pfam" id="PF02381">
    <property type="entry name" value="MraZ"/>
    <property type="match status" value="2"/>
</dbReference>
<dbReference type="SUPFAM" id="SSF89447">
    <property type="entry name" value="AbrB/MazE/MraZ-like"/>
    <property type="match status" value="1"/>
</dbReference>
<dbReference type="PROSITE" id="PS51740">
    <property type="entry name" value="SPOVT_ABRB"/>
    <property type="match status" value="2"/>
</dbReference>
<name>MRAZ_STACT</name>
<feature type="chain" id="PRO_1000148869" description="Transcriptional regulator MraZ">
    <location>
        <begin position="1"/>
        <end position="143"/>
    </location>
</feature>
<feature type="domain" description="SpoVT-AbrB 1" evidence="2">
    <location>
        <begin position="5"/>
        <end position="47"/>
    </location>
</feature>
<feature type="domain" description="SpoVT-AbrB 2" evidence="2">
    <location>
        <begin position="76"/>
        <end position="119"/>
    </location>
</feature>
<accession>B9DPQ8</accession>
<organism>
    <name type="scientific">Staphylococcus carnosus (strain TM300)</name>
    <dbReference type="NCBI Taxonomy" id="396513"/>
    <lineage>
        <taxon>Bacteria</taxon>
        <taxon>Bacillati</taxon>
        <taxon>Bacillota</taxon>
        <taxon>Bacilli</taxon>
        <taxon>Bacillales</taxon>
        <taxon>Staphylococcaceae</taxon>
        <taxon>Staphylococcus</taxon>
    </lineage>
</organism>
<comment type="subunit">
    <text evidence="1">Forms oligomers.</text>
</comment>
<comment type="subcellular location">
    <subcellularLocation>
        <location evidence="1">Cytoplasm</location>
        <location evidence="1">Nucleoid</location>
    </subcellularLocation>
</comment>
<comment type="similarity">
    <text evidence="1">Belongs to the MraZ family.</text>
</comment>
<protein>
    <recommendedName>
        <fullName>Transcriptional regulator MraZ</fullName>
    </recommendedName>
</protein>